<name>NADD_THEMA</name>
<protein>
    <recommendedName>
        <fullName>Probable nicotinate-nucleotide adenylyltransferase</fullName>
        <ecNumber>2.7.7.18</ecNumber>
    </recommendedName>
    <alternativeName>
        <fullName>Deamido-NAD(+) diphosphorylase</fullName>
    </alternativeName>
    <alternativeName>
        <fullName>Deamido-NAD(+) pyrophosphorylase</fullName>
    </alternativeName>
    <alternativeName>
        <fullName>Nicotinate mononucleotide adenylyltransferase</fullName>
        <shortName>NaMN adenylyltransferase</shortName>
    </alternativeName>
</protein>
<evidence type="ECO:0000250" key="1"/>
<evidence type="ECO:0000305" key="2"/>
<comment type="function">
    <text evidence="1">Catalyzes the reversible adenylation of nicotinate mononucleotide (NaMN) to nicotinic acid adenine dinucleotide (NaAD).</text>
</comment>
<comment type="catalytic activity">
    <reaction>
        <text>nicotinate beta-D-ribonucleotide + ATP + H(+) = deamido-NAD(+) + diphosphate</text>
        <dbReference type="Rhea" id="RHEA:22860"/>
        <dbReference type="ChEBI" id="CHEBI:15378"/>
        <dbReference type="ChEBI" id="CHEBI:30616"/>
        <dbReference type="ChEBI" id="CHEBI:33019"/>
        <dbReference type="ChEBI" id="CHEBI:57502"/>
        <dbReference type="ChEBI" id="CHEBI:58437"/>
        <dbReference type="EC" id="2.7.7.18"/>
    </reaction>
</comment>
<comment type="pathway">
    <text>Cofactor biosynthesis; NAD(+) biosynthesis; deamido-NAD(+) from nicotinate D-ribonucleotide: step 1/1.</text>
</comment>
<comment type="similarity">
    <text evidence="2">Belongs to the NadD family.</text>
</comment>
<reference key="1">
    <citation type="journal article" date="1999" name="Nature">
        <title>Evidence for lateral gene transfer between Archaea and Bacteria from genome sequence of Thermotoga maritima.</title>
        <authorList>
            <person name="Nelson K.E."/>
            <person name="Clayton R.A."/>
            <person name="Gill S.R."/>
            <person name="Gwinn M.L."/>
            <person name="Dodson R.J."/>
            <person name="Haft D.H."/>
            <person name="Hickey E.K."/>
            <person name="Peterson J.D."/>
            <person name="Nelson W.C."/>
            <person name="Ketchum K.A."/>
            <person name="McDonald L.A."/>
            <person name="Utterback T.R."/>
            <person name="Malek J.A."/>
            <person name="Linher K.D."/>
            <person name="Garrett M.M."/>
            <person name="Stewart A.M."/>
            <person name="Cotton M.D."/>
            <person name="Pratt M.S."/>
            <person name="Phillips C.A."/>
            <person name="Richardson D.L."/>
            <person name="Heidelberg J.F."/>
            <person name="Sutton G.G."/>
            <person name="Fleischmann R.D."/>
            <person name="Eisen J.A."/>
            <person name="White O."/>
            <person name="Salzberg S.L."/>
            <person name="Smith H.O."/>
            <person name="Venter J.C."/>
            <person name="Fraser C.M."/>
        </authorList>
    </citation>
    <scope>NUCLEOTIDE SEQUENCE [LARGE SCALE GENOMIC DNA]</scope>
    <source>
        <strain>ATCC 43589 / DSM 3109 / JCM 10099 / NBRC 100826 / MSB8</strain>
    </source>
</reference>
<dbReference type="EC" id="2.7.7.18"/>
<dbReference type="EMBL" id="AE000512">
    <property type="protein sequence ID" value="AAD35191.1"/>
    <property type="molecule type" value="Genomic_DNA"/>
</dbReference>
<dbReference type="PIR" id="A72418">
    <property type="entry name" value="A72418"/>
</dbReference>
<dbReference type="RefSeq" id="NP_227913.1">
    <property type="nucleotide sequence ID" value="NC_000853.1"/>
</dbReference>
<dbReference type="RefSeq" id="WP_010865050.1">
    <property type="nucleotide sequence ID" value="NC_000853.1"/>
</dbReference>
<dbReference type="SMR" id="Q9WXV2"/>
<dbReference type="FunCoup" id="Q9WXV2">
    <property type="interactions" value="325"/>
</dbReference>
<dbReference type="STRING" id="243274.TM_0097"/>
<dbReference type="PaxDb" id="243274-THEMA_04320"/>
<dbReference type="EnsemblBacteria" id="AAD35191">
    <property type="protein sequence ID" value="AAD35191"/>
    <property type="gene ID" value="TM_0097"/>
</dbReference>
<dbReference type="KEGG" id="tma:TM0097"/>
<dbReference type="KEGG" id="tmm:Tmari_0094"/>
<dbReference type="KEGG" id="tmw:THMA_0093"/>
<dbReference type="eggNOG" id="COG1057">
    <property type="taxonomic scope" value="Bacteria"/>
</dbReference>
<dbReference type="InParanoid" id="Q9WXV2"/>
<dbReference type="OrthoDB" id="5295945at2"/>
<dbReference type="BioCyc" id="MetaCyc:MONOMER-21961"/>
<dbReference type="UniPathway" id="UPA00253">
    <property type="reaction ID" value="UER00332"/>
</dbReference>
<dbReference type="Proteomes" id="UP000008183">
    <property type="component" value="Chromosome"/>
</dbReference>
<dbReference type="GO" id="GO:0005524">
    <property type="term" value="F:ATP binding"/>
    <property type="evidence" value="ECO:0007669"/>
    <property type="project" value="UniProtKB-KW"/>
</dbReference>
<dbReference type="GO" id="GO:0004515">
    <property type="term" value="F:nicotinate-nucleotide adenylyltransferase activity"/>
    <property type="evidence" value="ECO:0007669"/>
    <property type="project" value="UniProtKB-UniRule"/>
</dbReference>
<dbReference type="GO" id="GO:0009435">
    <property type="term" value="P:NAD biosynthetic process"/>
    <property type="evidence" value="ECO:0007669"/>
    <property type="project" value="UniProtKB-UniRule"/>
</dbReference>
<dbReference type="CDD" id="cd02165">
    <property type="entry name" value="NMNAT"/>
    <property type="match status" value="1"/>
</dbReference>
<dbReference type="Gene3D" id="3.40.50.620">
    <property type="entry name" value="HUPs"/>
    <property type="match status" value="1"/>
</dbReference>
<dbReference type="HAMAP" id="MF_00244">
    <property type="entry name" value="NaMN_adenylyltr"/>
    <property type="match status" value="1"/>
</dbReference>
<dbReference type="InterPro" id="IPR004821">
    <property type="entry name" value="Cyt_trans-like"/>
</dbReference>
<dbReference type="InterPro" id="IPR005248">
    <property type="entry name" value="NadD/NMNAT"/>
</dbReference>
<dbReference type="InterPro" id="IPR014729">
    <property type="entry name" value="Rossmann-like_a/b/a_fold"/>
</dbReference>
<dbReference type="NCBIfam" id="TIGR00125">
    <property type="entry name" value="cyt_tran_rel"/>
    <property type="match status" value="1"/>
</dbReference>
<dbReference type="NCBIfam" id="TIGR00482">
    <property type="entry name" value="nicotinate (nicotinamide) nucleotide adenylyltransferase"/>
    <property type="match status" value="1"/>
</dbReference>
<dbReference type="PANTHER" id="PTHR39321">
    <property type="entry name" value="NICOTINATE-NUCLEOTIDE ADENYLYLTRANSFERASE-RELATED"/>
    <property type="match status" value="1"/>
</dbReference>
<dbReference type="PANTHER" id="PTHR39321:SF3">
    <property type="entry name" value="PHOSPHOPANTETHEINE ADENYLYLTRANSFERASE"/>
    <property type="match status" value="1"/>
</dbReference>
<dbReference type="Pfam" id="PF01467">
    <property type="entry name" value="CTP_transf_like"/>
    <property type="match status" value="1"/>
</dbReference>
<dbReference type="SUPFAM" id="SSF52374">
    <property type="entry name" value="Nucleotidylyl transferase"/>
    <property type="match status" value="1"/>
</dbReference>
<sequence length="205" mass="23796">MLSGSETSSLNTGNRIGIFGGSFDPVHTGHVLVSVYTLEILDLDRLIVVPVFNPPHKKTVAPFEKRFEWLKKVFEGMEKMEVSDYEKRRGGVSYSIFTIEYFSEIYKTKPFFIVGEDALSYFEKWYRYRDILKKSTLVVYPRYCGKPYHEHARRVLGDLSEIVFLDMPIVQISSTEIRERARLGKTLKGFVPEEIRKEVEVFYGG</sequence>
<gene>
    <name type="primary">nadD</name>
    <name type="ordered locus">TM_0097</name>
</gene>
<organism>
    <name type="scientific">Thermotoga maritima (strain ATCC 43589 / DSM 3109 / JCM 10099 / NBRC 100826 / MSB8)</name>
    <dbReference type="NCBI Taxonomy" id="243274"/>
    <lineage>
        <taxon>Bacteria</taxon>
        <taxon>Thermotogati</taxon>
        <taxon>Thermotogota</taxon>
        <taxon>Thermotogae</taxon>
        <taxon>Thermotogales</taxon>
        <taxon>Thermotogaceae</taxon>
        <taxon>Thermotoga</taxon>
    </lineage>
</organism>
<keyword id="KW-0067">ATP-binding</keyword>
<keyword id="KW-0520">NAD</keyword>
<keyword id="KW-0547">Nucleotide-binding</keyword>
<keyword id="KW-0548">Nucleotidyltransferase</keyword>
<keyword id="KW-0662">Pyridine nucleotide biosynthesis</keyword>
<keyword id="KW-1185">Reference proteome</keyword>
<keyword id="KW-0808">Transferase</keyword>
<feature type="chain" id="PRO_0000181460" description="Probable nicotinate-nucleotide adenylyltransferase">
    <location>
        <begin position="1"/>
        <end position="205"/>
    </location>
</feature>
<proteinExistence type="inferred from homology"/>
<accession>Q9WXV2</accession>